<keyword id="KW-0007">Acetylation</keyword>
<keyword id="KW-0040">ANK repeat</keyword>
<keyword id="KW-0963">Cytoplasm</keyword>
<keyword id="KW-0342">GTP-binding</keyword>
<keyword id="KW-0343">GTPase activation</keyword>
<keyword id="KW-0479">Metal-binding</keyword>
<keyword id="KW-0547">Nucleotide-binding</keyword>
<keyword id="KW-0597">Phosphoprotein</keyword>
<keyword id="KW-0653">Protein transport</keyword>
<keyword id="KW-1185">Reference proteome</keyword>
<keyword id="KW-0677">Repeat</keyword>
<keyword id="KW-0813">Transport</keyword>
<keyword id="KW-0862">Zinc</keyword>
<keyword id="KW-0863">Zinc-finger</keyword>
<organism>
    <name type="scientific">Mus musculus</name>
    <name type="common">Mouse</name>
    <dbReference type="NCBI Taxonomy" id="10090"/>
    <lineage>
        <taxon>Eukaryota</taxon>
        <taxon>Metazoa</taxon>
        <taxon>Chordata</taxon>
        <taxon>Craniata</taxon>
        <taxon>Vertebrata</taxon>
        <taxon>Euteleostomi</taxon>
        <taxon>Mammalia</taxon>
        <taxon>Eutheria</taxon>
        <taxon>Euarchontoglires</taxon>
        <taxon>Glires</taxon>
        <taxon>Rodentia</taxon>
        <taxon>Myomorpha</taxon>
        <taxon>Muroidea</taxon>
        <taxon>Muridae</taxon>
        <taxon>Murinae</taxon>
        <taxon>Mus</taxon>
        <taxon>Mus</taxon>
    </lineage>
</organism>
<dbReference type="EMBL" id="AK035494">
    <property type="protein sequence ID" value="BAC29078.1"/>
    <property type="molecule type" value="mRNA"/>
</dbReference>
<dbReference type="EMBL" id="AK046523">
    <property type="protein sequence ID" value="BAC32770.1"/>
    <property type="molecule type" value="mRNA"/>
</dbReference>
<dbReference type="EMBL" id="AK147503">
    <property type="protein sequence ID" value="BAE27957.1"/>
    <property type="molecule type" value="mRNA"/>
</dbReference>
<dbReference type="EMBL" id="AK129289">
    <property type="protein sequence ID" value="BAC98099.2"/>
    <property type="status" value="ALT_INIT"/>
    <property type="molecule type" value="mRNA"/>
</dbReference>
<dbReference type="CCDS" id="CCDS15149.1"/>
<dbReference type="RefSeq" id="NP_001032213.1">
    <property type="nucleotide sequence ID" value="NM_001037136.1"/>
</dbReference>
<dbReference type="RefSeq" id="NP_835220.1">
    <property type="nucleotide sequence ID" value="NM_178119.4"/>
</dbReference>
<dbReference type="SMR" id="Q8BXK8"/>
<dbReference type="BioGRID" id="237241">
    <property type="interactions" value="5"/>
</dbReference>
<dbReference type="CORUM" id="Q8BXK8"/>
<dbReference type="FunCoup" id="Q8BXK8">
    <property type="interactions" value="1099"/>
</dbReference>
<dbReference type="IntAct" id="Q8BXK8">
    <property type="interactions" value="2"/>
</dbReference>
<dbReference type="MINT" id="Q8BXK8"/>
<dbReference type="STRING" id="10090.ENSMUSP00000027521"/>
<dbReference type="GlyGen" id="Q8BXK8">
    <property type="glycosylation" value="2 sites, 1 N-linked glycan (1 site)"/>
</dbReference>
<dbReference type="iPTMnet" id="Q8BXK8"/>
<dbReference type="PhosphoSitePlus" id="Q8BXK8"/>
<dbReference type="SwissPalm" id="Q8BXK8"/>
<dbReference type="PaxDb" id="10090-ENSMUSP00000027521"/>
<dbReference type="PeptideAtlas" id="Q8BXK8"/>
<dbReference type="ProteomicsDB" id="296077"/>
<dbReference type="Pumba" id="Q8BXK8"/>
<dbReference type="Antibodypedia" id="34463">
    <property type="antibodies" value="151 antibodies from 25 providers"/>
</dbReference>
<dbReference type="DNASU" id="347722"/>
<dbReference type="Ensembl" id="ENSMUST00000027521.15">
    <property type="protein sequence ID" value="ENSMUSP00000027521.9"/>
    <property type="gene ID" value="ENSMUSG00000055013.17"/>
</dbReference>
<dbReference type="GeneID" id="347722"/>
<dbReference type="KEGG" id="mmu:347722"/>
<dbReference type="UCSC" id="uc007byw.1">
    <property type="organism name" value="mouse"/>
</dbReference>
<dbReference type="AGR" id="MGI:2653690"/>
<dbReference type="CTD" id="116987"/>
<dbReference type="MGI" id="MGI:2653690">
    <property type="gene designation" value="Agap1"/>
</dbReference>
<dbReference type="VEuPathDB" id="HostDB:ENSMUSG00000055013"/>
<dbReference type="eggNOG" id="KOG0705">
    <property type="taxonomic scope" value="Eukaryota"/>
</dbReference>
<dbReference type="GeneTree" id="ENSGT00940000154793"/>
<dbReference type="InParanoid" id="Q8BXK8"/>
<dbReference type="OMA" id="WYGANIK"/>
<dbReference type="OrthoDB" id="36360at9989"/>
<dbReference type="PhylomeDB" id="Q8BXK8"/>
<dbReference type="TreeFam" id="TF317762"/>
<dbReference type="BioGRID-ORCS" id="347722">
    <property type="hits" value="2 hits in 77 CRISPR screens"/>
</dbReference>
<dbReference type="CD-CODE" id="CE726F99">
    <property type="entry name" value="Postsynaptic density"/>
</dbReference>
<dbReference type="ChiTaRS" id="Agap1">
    <property type="organism name" value="mouse"/>
</dbReference>
<dbReference type="PRO" id="PR:Q8BXK8"/>
<dbReference type="Proteomes" id="UP000000589">
    <property type="component" value="Chromosome 1"/>
</dbReference>
<dbReference type="RNAct" id="Q8BXK8">
    <property type="molecule type" value="protein"/>
</dbReference>
<dbReference type="Bgee" id="ENSMUSG00000055013">
    <property type="expression patterns" value="Expressed in retinal neural layer and 266 other cell types or tissues"/>
</dbReference>
<dbReference type="ExpressionAtlas" id="Q8BXK8">
    <property type="expression patterns" value="baseline and differential"/>
</dbReference>
<dbReference type="GO" id="GO:0005829">
    <property type="term" value="C:cytosol"/>
    <property type="evidence" value="ECO:0000266"/>
    <property type="project" value="MGI"/>
</dbReference>
<dbReference type="GO" id="GO:0005525">
    <property type="term" value="F:GTP binding"/>
    <property type="evidence" value="ECO:0007669"/>
    <property type="project" value="UniProtKB-KW"/>
</dbReference>
<dbReference type="GO" id="GO:0005096">
    <property type="term" value="F:GTPase activator activity"/>
    <property type="evidence" value="ECO:0007669"/>
    <property type="project" value="UniProtKB-KW"/>
</dbReference>
<dbReference type="GO" id="GO:0003924">
    <property type="term" value="F:GTPase activity"/>
    <property type="evidence" value="ECO:0000266"/>
    <property type="project" value="MGI"/>
</dbReference>
<dbReference type="GO" id="GO:0008270">
    <property type="term" value="F:zinc ion binding"/>
    <property type="evidence" value="ECO:0007669"/>
    <property type="project" value="UniProtKB-KW"/>
</dbReference>
<dbReference type="GO" id="GO:0015031">
    <property type="term" value="P:protein transport"/>
    <property type="evidence" value="ECO:0007669"/>
    <property type="project" value="UniProtKB-KW"/>
</dbReference>
<dbReference type="CDD" id="cd08853">
    <property type="entry name" value="ArfGap_AGAP2"/>
    <property type="match status" value="1"/>
</dbReference>
<dbReference type="CDD" id="cd04103">
    <property type="entry name" value="Centaurin_gamma"/>
    <property type="match status" value="1"/>
</dbReference>
<dbReference type="CDD" id="cd01250">
    <property type="entry name" value="PH_AGAP"/>
    <property type="match status" value="1"/>
</dbReference>
<dbReference type="FunFam" id="1.10.220.150:FF:000001">
    <property type="entry name" value="Arf-GAP with GTPase, ANK repeat and PH domain-containing protein 1"/>
    <property type="match status" value="1"/>
</dbReference>
<dbReference type="FunFam" id="1.25.40.20:FF:000027">
    <property type="entry name" value="Arf-GAP with GTPase, ANK repeat and PH domain-containing protein 1"/>
    <property type="match status" value="1"/>
</dbReference>
<dbReference type="FunFam" id="3.40.50.300:FF:000178">
    <property type="entry name" value="Arf-GAP with GTPase, ANK repeat and PH domain-containing protein 1"/>
    <property type="match status" value="1"/>
</dbReference>
<dbReference type="FunFam" id="2.30.29.30:FF:000421">
    <property type="entry name" value="Arf-GAP with GTPase, ANK repeat and PH domain-containing protein 1 isoform B"/>
    <property type="match status" value="1"/>
</dbReference>
<dbReference type="FunFam" id="2.30.29.30:FF:000199">
    <property type="entry name" value="Arf-GAP with GTPase, ANK repeat and PH domain-containing protein 3"/>
    <property type="match status" value="1"/>
</dbReference>
<dbReference type="Gene3D" id="1.25.40.20">
    <property type="entry name" value="Ankyrin repeat-containing domain"/>
    <property type="match status" value="1"/>
</dbReference>
<dbReference type="Gene3D" id="1.10.220.150">
    <property type="entry name" value="Arf GTPase activating protein"/>
    <property type="match status" value="1"/>
</dbReference>
<dbReference type="Gene3D" id="3.40.50.300">
    <property type="entry name" value="P-loop containing nucleotide triphosphate hydrolases"/>
    <property type="match status" value="1"/>
</dbReference>
<dbReference type="Gene3D" id="2.30.29.30">
    <property type="entry name" value="Pleckstrin-homology domain (PH domain)/Phosphotyrosine-binding domain (PTB)"/>
    <property type="match status" value="2"/>
</dbReference>
<dbReference type="InterPro" id="IPR002110">
    <property type="entry name" value="Ankyrin_rpt"/>
</dbReference>
<dbReference type="InterPro" id="IPR036770">
    <property type="entry name" value="Ankyrin_rpt-contain_sf"/>
</dbReference>
<dbReference type="InterPro" id="IPR051282">
    <property type="entry name" value="Arf-GAP_GTPase_ANK_PH"/>
</dbReference>
<dbReference type="InterPro" id="IPR037278">
    <property type="entry name" value="ARFGAP/RecO"/>
</dbReference>
<dbReference type="InterPro" id="IPR001164">
    <property type="entry name" value="ArfGAP_dom"/>
</dbReference>
<dbReference type="InterPro" id="IPR038508">
    <property type="entry name" value="ArfGAP_dom_sf"/>
</dbReference>
<dbReference type="InterPro" id="IPR027417">
    <property type="entry name" value="P-loop_NTPase"/>
</dbReference>
<dbReference type="InterPro" id="IPR011993">
    <property type="entry name" value="PH-like_dom_sf"/>
</dbReference>
<dbReference type="InterPro" id="IPR001849">
    <property type="entry name" value="PH_domain"/>
</dbReference>
<dbReference type="InterPro" id="IPR001806">
    <property type="entry name" value="Small_GTPase"/>
</dbReference>
<dbReference type="PANTHER" id="PTHR45819:SF1">
    <property type="entry name" value="ARF-GAP WITH GTPASE, ANK REPEAT AND PH DOMAIN-CONTAINING PROTEIN 1"/>
    <property type="match status" value="1"/>
</dbReference>
<dbReference type="PANTHER" id="PTHR45819">
    <property type="entry name" value="CENTAURIN-GAMMA-1A"/>
    <property type="match status" value="1"/>
</dbReference>
<dbReference type="Pfam" id="PF12796">
    <property type="entry name" value="Ank_2"/>
    <property type="match status" value="1"/>
</dbReference>
<dbReference type="Pfam" id="PF01412">
    <property type="entry name" value="ArfGap"/>
    <property type="match status" value="1"/>
</dbReference>
<dbReference type="Pfam" id="PF00071">
    <property type="entry name" value="Ras"/>
    <property type="match status" value="1"/>
</dbReference>
<dbReference type="PRINTS" id="PR00405">
    <property type="entry name" value="REVINTRACTNG"/>
</dbReference>
<dbReference type="SMART" id="SM00248">
    <property type="entry name" value="ANK"/>
    <property type="match status" value="2"/>
</dbReference>
<dbReference type="SMART" id="SM00105">
    <property type="entry name" value="ArfGap"/>
    <property type="match status" value="1"/>
</dbReference>
<dbReference type="SMART" id="SM00233">
    <property type="entry name" value="PH"/>
    <property type="match status" value="1"/>
</dbReference>
<dbReference type="SMART" id="SM00175">
    <property type="entry name" value="RAB"/>
    <property type="match status" value="1"/>
</dbReference>
<dbReference type="SMART" id="SM00173">
    <property type="entry name" value="RAS"/>
    <property type="match status" value="1"/>
</dbReference>
<dbReference type="SMART" id="SM00174">
    <property type="entry name" value="RHO"/>
    <property type="match status" value="1"/>
</dbReference>
<dbReference type="SUPFAM" id="SSF48403">
    <property type="entry name" value="Ankyrin repeat"/>
    <property type="match status" value="1"/>
</dbReference>
<dbReference type="SUPFAM" id="SSF57863">
    <property type="entry name" value="ArfGap/RecO-like zinc finger"/>
    <property type="match status" value="1"/>
</dbReference>
<dbReference type="SUPFAM" id="SSF52540">
    <property type="entry name" value="P-loop containing nucleoside triphosphate hydrolases"/>
    <property type="match status" value="1"/>
</dbReference>
<dbReference type="SUPFAM" id="SSF50729">
    <property type="entry name" value="PH domain-like"/>
    <property type="match status" value="1"/>
</dbReference>
<dbReference type="PROSITE" id="PS50297">
    <property type="entry name" value="ANK_REP_REGION"/>
    <property type="match status" value="1"/>
</dbReference>
<dbReference type="PROSITE" id="PS50088">
    <property type="entry name" value="ANK_REPEAT"/>
    <property type="match status" value="1"/>
</dbReference>
<dbReference type="PROSITE" id="PS50115">
    <property type="entry name" value="ARFGAP"/>
    <property type="match status" value="1"/>
</dbReference>
<dbReference type="PROSITE" id="PS52057">
    <property type="entry name" value="GLD"/>
    <property type="match status" value="1"/>
</dbReference>
<dbReference type="PROSITE" id="PS50003">
    <property type="entry name" value="PH_DOMAIN"/>
    <property type="match status" value="1"/>
</dbReference>
<sequence>MNYQQQLANSAAIRAEIQRFESVHPNIYSIYELLERVEEPVLQNQIREHVIAIEDAFVNSQEWTLSRSVPELKVGIVGNLASGKSALVHRYLTGTYVQEESPEGGRFKKEIVVDGQSYLLLIRDEGGPPEAQFAMWVDAVIFVFSLEDEISFQTVYHYYSRMANYRNTSEIPLVLVGTQDAISSTNPRVIDDVRARKLSNDLKRCTYYETCATYGLNVERVFQDVAQKIVATRKKQQLSIGPCKSLPNSPSHSSVCSAQVSAVHISQTSNGGGSLSDYSSSVPSTPSTSQKELRIDVPPTANTPTPVRKQSKRRSNLFTSRKGSDPDKEKKGLESRADSIGSGRAIPIKQGMLLKRSGKSLNKEWKKKYVTLCDNGVLTYHPSLHDYMQNVHGKEIDLLRTTVKVPGKRPPRATSACAPISSPKTNGLAKDMSSLHISPNSGNVTSASGSQMASGISLVSFNSRPDGMHQRSYSVSSADQWSDATVIANSAISSDTGLGDSVCSSPSISSSTSPKLDPPPSPHANRKKHRRKKSTSNFKADGLSGTAEEQEENLEFIIVSLTGQTWHFEATTYEERDAWVQAIESQILASLQSCESSKNKSRLTSQSEAMALQSIRNMRGNSHCVDCDTQNPNWASLNLGALMCIECSGIHRNLGTHLSRVRSLDLDDWPMELIKVMSSIGNELANSVWEEGSQGRTKPSLDSTREEKERWIRAKYEQKLFLAPLPCTEFSLGQQLLRATAEEDLRTVILLLAHGSRDEVNETCGEGDGRTALHLACRKGNVVLAQLLIWYGVDVMARDAHGNTALAYARQASSQECIDVLLQYGCPDERFVLMATPNLSRKSNSRNNSSGRAPSVI</sequence>
<reference key="1">
    <citation type="journal article" date="2005" name="Science">
        <title>The transcriptional landscape of the mammalian genome.</title>
        <authorList>
            <person name="Carninci P."/>
            <person name="Kasukawa T."/>
            <person name="Katayama S."/>
            <person name="Gough J."/>
            <person name="Frith M.C."/>
            <person name="Maeda N."/>
            <person name="Oyama R."/>
            <person name="Ravasi T."/>
            <person name="Lenhard B."/>
            <person name="Wells C."/>
            <person name="Kodzius R."/>
            <person name="Shimokawa K."/>
            <person name="Bajic V.B."/>
            <person name="Brenner S.E."/>
            <person name="Batalov S."/>
            <person name="Forrest A.R."/>
            <person name="Zavolan M."/>
            <person name="Davis M.J."/>
            <person name="Wilming L.G."/>
            <person name="Aidinis V."/>
            <person name="Allen J.E."/>
            <person name="Ambesi-Impiombato A."/>
            <person name="Apweiler R."/>
            <person name="Aturaliya R.N."/>
            <person name="Bailey T.L."/>
            <person name="Bansal M."/>
            <person name="Baxter L."/>
            <person name="Beisel K.W."/>
            <person name="Bersano T."/>
            <person name="Bono H."/>
            <person name="Chalk A.M."/>
            <person name="Chiu K.P."/>
            <person name="Choudhary V."/>
            <person name="Christoffels A."/>
            <person name="Clutterbuck D.R."/>
            <person name="Crowe M.L."/>
            <person name="Dalla E."/>
            <person name="Dalrymple B.P."/>
            <person name="de Bono B."/>
            <person name="Della Gatta G."/>
            <person name="di Bernardo D."/>
            <person name="Down T."/>
            <person name="Engstrom P."/>
            <person name="Fagiolini M."/>
            <person name="Faulkner G."/>
            <person name="Fletcher C.F."/>
            <person name="Fukushima T."/>
            <person name="Furuno M."/>
            <person name="Futaki S."/>
            <person name="Gariboldi M."/>
            <person name="Georgii-Hemming P."/>
            <person name="Gingeras T.R."/>
            <person name="Gojobori T."/>
            <person name="Green R.E."/>
            <person name="Gustincich S."/>
            <person name="Harbers M."/>
            <person name="Hayashi Y."/>
            <person name="Hensch T.K."/>
            <person name="Hirokawa N."/>
            <person name="Hill D."/>
            <person name="Huminiecki L."/>
            <person name="Iacono M."/>
            <person name="Ikeo K."/>
            <person name="Iwama A."/>
            <person name="Ishikawa T."/>
            <person name="Jakt M."/>
            <person name="Kanapin A."/>
            <person name="Katoh M."/>
            <person name="Kawasawa Y."/>
            <person name="Kelso J."/>
            <person name="Kitamura H."/>
            <person name="Kitano H."/>
            <person name="Kollias G."/>
            <person name="Krishnan S.P."/>
            <person name="Kruger A."/>
            <person name="Kummerfeld S.K."/>
            <person name="Kurochkin I.V."/>
            <person name="Lareau L.F."/>
            <person name="Lazarevic D."/>
            <person name="Lipovich L."/>
            <person name="Liu J."/>
            <person name="Liuni S."/>
            <person name="McWilliam S."/>
            <person name="Madan Babu M."/>
            <person name="Madera M."/>
            <person name="Marchionni L."/>
            <person name="Matsuda H."/>
            <person name="Matsuzawa S."/>
            <person name="Miki H."/>
            <person name="Mignone F."/>
            <person name="Miyake S."/>
            <person name="Morris K."/>
            <person name="Mottagui-Tabar S."/>
            <person name="Mulder N."/>
            <person name="Nakano N."/>
            <person name="Nakauchi H."/>
            <person name="Ng P."/>
            <person name="Nilsson R."/>
            <person name="Nishiguchi S."/>
            <person name="Nishikawa S."/>
            <person name="Nori F."/>
            <person name="Ohara O."/>
            <person name="Okazaki Y."/>
            <person name="Orlando V."/>
            <person name="Pang K.C."/>
            <person name="Pavan W.J."/>
            <person name="Pavesi G."/>
            <person name="Pesole G."/>
            <person name="Petrovsky N."/>
            <person name="Piazza S."/>
            <person name="Reed J."/>
            <person name="Reid J.F."/>
            <person name="Ring B.Z."/>
            <person name="Ringwald M."/>
            <person name="Rost B."/>
            <person name="Ruan Y."/>
            <person name="Salzberg S.L."/>
            <person name="Sandelin A."/>
            <person name="Schneider C."/>
            <person name="Schoenbach C."/>
            <person name="Sekiguchi K."/>
            <person name="Semple C.A."/>
            <person name="Seno S."/>
            <person name="Sessa L."/>
            <person name="Sheng Y."/>
            <person name="Shibata Y."/>
            <person name="Shimada H."/>
            <person name="Shimada K."/>
            <person name="Silva D."/>
            <person name="Sinclair B."/>
            <person name="Sperling S."/>
            <person name="Stupka E."/>
            <person name="Sugiura K."/>
            <person name="Sultana R."/>
            <person name="Takenaka Y."/>
            <person name="Taki K."/>
            <person name="Tammoja K."/>
            <person name="Tan S.L."/>
            <person name="Tang S."/>
            <person name="Taylor M.S."/>
            <person name="Tegner J."/>
            <person name="Teichmann S.A."/>
            <person name="Ueda H.R."/>
            <person name="van Nimwegen E."/>
            <person name="Verardo R."/>
            <person name="Wei C.L."/>
            <person name="Yagi K."/>
            <person name="Yamanishi H."/>
            <person name="Zabarovsky E."/>
            <person name="Zhu S."/>
            <person name="Zimmer A."/>
            <person name="Hide W."/>
            <person name="Bult C."/>
            <person name="Grimmond S.M."/>
            <person name="Teasdale R.D."/>
            <person name="Liu E.T."/>
            <person name="Brusic V."/>
            <person name="Quackenbush J."/>
            <person name="Wahlestedt C."/>
            <person name="Mattick J.S."/>
            <person name="Hume D.A."/>
            <person name="Kai C."/>
            <person name="Sasaki D."/>
            <person name="Tomaru Y."/>
            <person name="Fukuda S."/>
            <person name="Kanamori-Katayama M."/>
            <person name="Suzuki M."/>
            <person name="Aoki J."/>
            <person name="Arakawa T."/>
            <person name="Iida J."/>
            <person name="Imamura K."/>
            <person name="Itoh M."/>
            <person name="Kato T."/>
            <person name="Kawaji H."/>
            <person name="Kawagashira N."/>
            <person name="Kawashima T."/>
            <person name="Kojima M."/>
            <person name="Kondo S."/>
            <person name="Konno H."/>
            <person name="Nakano K."/>
            <person name="Ninomiya N."/>
            <person name="Nishio T."/>
            <person name="Okada M."/>
            <person name="Plessy C."/>
            <person name="Shibata K."/>
            <person name="Shiraki T."/>
            <person name="Suzuki S."/>
            <person name="Tagami M."/>
            <person name="Waki K."/>
            <person name="Watahiki A."/>
            <person name="Okamura-Oho Y."/>
            <person name="Suzuki H."/>
            <person name="Kawai J."/>
            <person name="Hayashizaki Y."/>
        </authorList>
    </citation>
    <scope>NUCLEOTIDE SEQUENCE [LARGE SCALE MRNA]</scope>
    <source>
        <strain>C57BL/6J</strain>
        <tissue>Adrenal gland</tissue>
        <tissue>Urinary bladder</tissue>
    </source>
</reference>
<reference key="2">
    <citation type="journal article" date="2003" name="DNA Res.">
        <title>Prediction of the coding sequences of mouse homologues of KIAA gene: III. The complete nucleotide sequences of 500 mouse KIAA-homologous cDNAs identified by screening of terminal sequences of cDNA clones randomly sampled from size-fractionated libraries.</title>
        <authorList>
            <person name="Okazaki N."/>
            <person name="Kikuno R."/>
            <person name="Ohara R."/>
            <person name="Inamoto S."/>
            <person name="Koseki H."/>
            <person name="Hiraoka S."/>
            <person name="Saga Y."/>
            <person name="Nagase T."/>
            <person name="Ohara O."/>
            <person name="Koga H."/>
        </authorList>
    </citation>
    <scope>NUCLEOTIDE SEQUENCE [LARGE SCALE MRNA]</scope>
    <source>
        <tissue>Thymus</tissue>
    </source>
</reference>
<reference key="3">
    <citation type="submission" date="2005-02" db="EMBL/GenBank/DDBJ databases">
        <authorList>
            <person name="Okazaki N."/>
            <person name="Kikuno R."/>
            <person name="Nagase T."/>
            <person name="Ohara O."/>
            <person name="Koga H."/>
        </authorList>
    </citation>
    <scope>SEQUENCE REVISION</scope>
</reference>
<reference key="4">
    <citation type="journal article" date="2003" name="Mol. Cell. Biol.">
        <title>GGAPs, a new family of bifunctional GTP-binding and GTPase-activating proteins.</title>
        <authorList>
            <person name="Xia C."/>
            <person name="Ma W."/>
            <person name="Stafford L.J."/>
            <person name="Liu C."/>
            <person name="Gong L."/>
            <person name="Martin J.F."/>
            <person name="Liu M."/>
        </authorList>
    </citation>
    <scope>DEVELOPMENTAL STAGE</scope>
</reference>
<reference key="5">
    <citation type="journal article" date="2004" name="J. Biol. Chem.">
        <title>AGAP1, a novel binding partner of nitric oxide-sensitive guanylyl cyclase.</title>
        <authorList>
            <person name="Meurer S."/>
            <person name="Pioch S."/>
            <person name="Wagner K."/>
            <person name="Mueller-Esterl W."/>
            <person name="Gross S."/>
        </authorList>
    </citation>
    <scope>TISSUE SPECIFICITY</scope>
</reference>
<reference key="6">
    <citation type="journal article" date="2010" name="Cell">
        <title>A tissue-specific atlas of mouse protein phosphorylation and expression.</title>
        <authorList>
            <person name="Huttlin E.L."/>
            <person name="Jedrychowski M.P."/>
            <person name="Elias J.E."/>
            <person name="Goswami T."/>
            <person name="Rad R."/>
            <person name="Beausoleil S.A."/>
            <person name="Villen J."/>
            <person name="Haas W."/>
            <person name="Sowa M.E."/>
            <person name="Gygi S.P."/>
        </authorList>
    </citation>
    <scope>PHOSPHORYLATION [LARGE SCALE ANALYSIS] AT SER-663 AND THR-836</scope>
    <scope>IDENTIFICATION BY MASS SPECTROMETRY [LARGE SCALE ANALYSIS]</scope>
    <source>
        <tissue>Brain</tissue>
        <tissue>Kidney</tissue>
    </source>
</reference>
<evidence type="ECO:0000250" key="1"/>
<evidence type="ECO:0000250" key="2">
    <source>
        <dbReference type="UniProtKB" id="Q9UPQ3"/>
    </source>
</evidence>
<evidence type="ECO:0000255" key="3"/>
<evidence type="ECO:0000255" key="4">
    <source>
        <dbReference type="PROSITE-ProRule" id="PRU00145"/>
    </source>
</evidence>
<evidence type="ECO:0000255" key="5">
    <source>
        <dbReference type="PROSITE-ProRule" id="PRU00288"/>
    </source>
</evidence>
<evidence type="ECO:0000255" key="6">
    <source>
        <dbReference type="PROSITE-ProRule" id="PRU01402"/>
    </source>
</evidence>
<evidence type="ECO:0000256" key="7">
    <source>
        <dbReference type="SAM" id="MobiDB-lite"/>
    </source>
</evidence>
<evidence type="ECO:0000269" key="8">
    <source>
    </source>
</evidence>
<evidence type="ECO:0000269" key="9">
    <source>
    </source>
</evidence>
<evidence type="ECO:0000305" key="10"/>
<evidence type="ECO:0007744" key="11">
    <source>
    </source>
</evidence>
<accession>Q8BXK8</accession>
<accession>Q3UHA0</accession>
<accession>Q6ZPX9</accession>
<accession>Q8BZG0</accession>
<gene>
    <name type="primary">Agap1</name>
    <name type="synonym">Centg2</name>
    <name type="synonym">Kiaa1099</name>
</gene>
<protein>
    <recommendedName>
        <fullName>Arf-GAP with GTPase, ANK repeat and PH domain-containing protein 1</fullName>
        <shortName>AGAP-1</shortName>
    </recommendedName>
    <alternativeName>
        <fullName>Centaurin-gamma-2</fullName>
        <shortName>Cnt-g2</shortName>
    </alternativeName>
</protein>
<proteinExistence type="evidence at protein level"/>
<comment type="function">
    <text evidence="1">GTPase-activating protein for ARF1 and, to a lesser extent, ARF5. Directly and specifically regulates the adapter protein 3 (AP-3)-dependent trafficking of proteins in the endosomal-lysosomal system (By similarity).</text>
</comment>
<comment type="activity regulation">
    <text evidence="1">GAP activity stimulated by phosphatidylinositol 3,4,5-trisphosphate (PIP3) and, to a lesser extent, by phosphatidylinositol 4,5-bisphosphate (PIP2). Phosphatidic acid potentiates PIP2 stimulation (By similarity).</text>
</comment>
<comment type="subunit">
    <text evidence="1">Homodimer. Interacts with several subunits of the AP-3 protein complex: AP3M1, AP3S1 and AP3S2. Interacts with GUCY1A3 and GUCY1B3 (By similarity).</text>
</comment>
<comment type="subcellular location">
    <subcellularLocation>
        <location evidence="1">Cytoplasm</location>
    </subcellularLocation>
    <text evidence="1">Associates with the endocytic compartment.</text>
</comment>
<comment type="tissue specificity">
    <text evidence="9">Widely expressed, with highest levels in brain and kidney.</text>
</comment>
<comment type="developmental stage">
    <text evidence="8">At 12.5 dpc, expression is restricted to neural tube, forebrain and midbrain.</text>
</comment>
<comment type="domain">
    <text>The PH domain mediates AP-3 binding.</text>
</comment>
<comment type="PTM">
    <text evidence="1">Phosphorylated on tyrosines.</text>
</comment>
<comment type="similarity">
    <text evidence="6 10">Belongs to the centaurin gamma-like family.</text>
</comment>
<comment type="sequence caution" evidence="10">
    <conflict type="erroneous initiation">
        <sequence resource="EMBL-CDS" id="BAC98099"/>
    </conflict>
</comment>
<name>AGAP1_MOUSE</name>
<feature type="chain" id="PRO_0000074219" description="Arf-GAP with GTPase, ANK repeat and PH domain-containing protein 1">
    <location>
        <begin position="1"/>
        <end position="857"/>
    </location>
</feature>
<feature type="domain" description="GLD" evidence="6">
    <location>
        <begin position="67"/>
        <end position="241"/>
    </location>
</feature>
<feature type="domain" description="PH" evidence="4">
    <location>
        <begin position="346"/>
        <end position="588"/>
    </location>
</feature>
<feature type="domain" description="Arf-GAP" evidence="5">
    <location>
        <begin position="609"/>
        <end position="729"/>
    </location>
</feature>
<feature type="repeat" description="ANK 1">
    <location>
        <begin position="768"/>
        <end position="797"/>
    </location>
</feature>
<feature type="repeat" description="ANK 2">
    <location>
        <begin position="801"/>
        <end position="830"/>
    </location>
</feature>
<feature type="zinc finger region" description="C4-type" evidence="5">
    <location>
        <begin position="624"/>
        <end position="647"/>
    </location>
</feature>
<feature type="region of interest" description="Small GTPase-like">
    <location>
        <begin position="66"/>
        <end position="276"/>
    </location>
</feature>
<feature type="region of interest" description="Disordered" evidence="7">
    <location>
        <begin position="267"/>
        <end position="342"/>
    </location>
</feature>
<feature type="region of interest" description="Disordered" evidence="7">
    <location>
        <begin position="407"/>
        <end position="431"/>
    </location>
</feature>
<feature type="region of interest" description="Disordered" evidence="7">
    <location>
        <begin position="497"/>
        <end position="547"/>
    </location>
</feature>
<feature type="compositionally biased region" description="Low complexity" evidence="7">
    <location>
        <begin position="275"/>
        <end position="289"/>
    </location>
</feature>
<feature type="compositionally biased region" description="Basic and acidic residues" evidence="7">
    <location>
        <begin position="322"/>
        <end position="337"/>
    </location>
</feature>
<feature type="compositionally biased region" description="Low complexity" evidence="7">
    <location>
        <begin position="501"/>
        <end position="513"/>
    </location>
</feature>
<feature type="compositionally biased region" description="Basic residues" evidence="7">
    <location>
        <begin position="524"/>
        <end position="534"/>
    </location>
</feature>
<feature type="binding site" evidence="3">
    <location>
        <begin position="78"/>
        <end position="85"/>
    </location>
    <ligand>
        <name>GTP</name>
        <dbReference type="ChEBI" id="CHEBI:37565"/>
    </ligand>
</feature>
<feature type="binding site" evidence="3">
    <location>
        <begin position="122"/>
        <end position="126"/>
    </location>
    <ligand>
        <name>GTP</name>
        <dbReference type="ChEBI" id="CHEBI:37565"/>
    </ligand>
</feature>
<feature type="binding site" evidence="3">
    <location>
        <begin position="178"/>
        <end position="181"/>
    </location>
    <ligand>
        <name>GTP</name>
        <dbReference type="ChEBI" id="CHEBI:37565"/>
    </ligand>
</feature>
<feature type="modified residue" description="N-acetylmethionine" evidence="2">
    <location>
        <position position="1"/>
    </location>
</feature>
<feature type="modified residue" description="Phosphoserine" evidence="2">
    <location>
        <position position="521"/>
    </location>
</feature>
<feature type="modified residue" description="Phosphoserine" evidence="2">
    <location>
        <position position="605"/>
    </location>
</feature>
<feature type="modified residue" description="Phosphoserine" evidence="11">
    <location>
        <position position="663"/>
    </location>
</feature>
<feature type="modified residue" description="Phosphothreonine" evidence="11">
    <location>
        <position position="836"/>
    </location>
</feature>
<feature type="sequence conflict" description="In Ref. 2; BAC98099." evidence="10" ref="2">
    <original>K</original>
    <variation>R</variation>
    <location>
        <position position="424"/>
    </location>
</feature>
<feature type="sequence conflict" description="In Ref. 1; BAC29078." evidence="10" ref="1">
    <original>D</original>
    <variation>Y</variation>
    <location>
        <position position="668"/>
    </location>
</feature>
<feature type="sequence conflict" description="In Ref. 1; BAE27957." evidence="10" ref="1">
    <original>S</original>
    <variation>P</variation>
    <location>
        <position position="700"/>
    </location>
</feature>
<feature type="sequence conflict" description="In Ref. 1; BAC29078." evidence="10" ref="1">
    <original>Q</original>
    <variation>H</variation>
    <location>
        <position position="811"/>
    </location>
</feature>